<organism>
    <name type="scientific">Saccharomyces cerevisiae (strain ATCC 204508 / S288c)</name>
    <name type="common">Baker's yeast</name>
    <dbReference type="NCBI Taxonomy" id="559292"/>
    <lineage>
        <taxon>Eukaryota</taxon>
        <taxon>Fungi</taxon>
        <taxon>Dikarya</taxon>
        <taxon>Ascomycota</taxon>
        <taxon>Saccharomycotina</taxon>
        <taxon>Saccharomycetes</taxon>
        <taxon>Saccharomycetales</taxon>
        <taxon>Saccharomycetaceae</taxon>
        <taxon>Saccharomyces</taxon>
    </lineage>
</organism>
<name>SDHX_YEAST</name>
<gene>
    <name type="ordered locus">YJL045W</name>
    <name type="ORF">J1194</name>
</gene>
<keyword id="KW-0249">Electron transport</keyword>
<keyword id="KW-0274">FAD</keyword>
<keyword id="KW-0285">Flavoprotein</keyword>
<keyword id="KW-0472">Membrane</keyword>
<keyword id="KW-0496">Mitochondrion</keyword>
<keyword id="KW-0999">Mitochondrion inner membrane</keyword>
<keyword id="KW-0560">Oxidoreductase</keyword>
<keyword id="KW-1185">Reference proteome</keyword>
<keyword id="KW-0809">Transit peptide</keyword>
<keyword id="KW-0813">Transport</keyword>
<keyword id="KW-0816">Tricarboxylic acid cycle</keyword>
<feature type="transit peptide" description="Mitochondrion" evidence="5">
    <location>
        <begin position="1"/>
        <end position="25"/>
    </location>
</feature>
<feature type="chain" id="PRO_0000010343" description="Succinate dehydrogenase [ubiquinone] flavoprotein subunit 2, mitochondrial">
    <location>
        <begin position="26"/>
        <end position="634"/>
    </location>
</feature>
<feature type="active site" description="Proton acceptor" evidence="4">
    <location>
        <position position="325"/>
    </location>
</feature>
<feature type="binding site" evidence="4">
    <location>
        <begin position="53"/>
        <end position="58"/>
    </location>
    <ligand>
        <name>FAD</name>
        <dbReference type="ChEBI" id="CHEBI:57692"/>
    </ligand>
</feature>
<feature type="binding site" evidence="4">
    <location>
        <begin position="76"/>
        <end position="91"/>
    </location>
    <ligand>
        <name>FAD</name>
        <dbReference type="ChEBI" id="CHEBI:57692"/>
    </ligand>
</feature>
<feature type="binding site" evidence="4">
    <location>
        <position position="260"/>
    </location>
    <ligand>
        <name>FAD</name>
        <dbReference type="ChEBI" id="CHEBI:57692"/>
    </ligand>
</feature>
<feature type="binding site" evidence="4">
    <location>
        <position position="281"/>
    </location>
    <ligand>
        <name>substrate</name>
    </ligand>
</feature>
<feature type="binding site" evidence="4">
    <location>
        <position position="293"/>
    </location>
    <ligand>
        <name>substrate</name>
    </ligand>
</feature>
<feature type="binding site" evidence="4">
    <location>
        <position position="392"/>
    </location>
    <ligand>
        <name>substrate</name>
    </ligand>
</feature>
<feature type="binding site" evidence="4">
    <location>
        <position position="427"/>
    </location>
    <ligand>
        <name>FAD</name>
        <dbReference type="ChEBI" id="CHEBI:57692"/>
    </ligand>
</feature>
<feature type="binding site" evidence="4">
    <location>
        <position position="438"/>
    </location>
    <ligand>
        <name>substrate</name>
    </ligand>
</feature>
<feature type="binding site" evidence="4">
    <location>
        <begin position="443"/>
        <end position="444"/>
    </location>
    <ligand>
        <name>FAD</name>
        <dbReference type="ChEBI" id="CHEBI:57692"/>
    </ligand>
</feature>
<feature type="modified residue" description="Tele-8alpha-FAD histidine" evidence="4">
    <location>
        <position position="84"/>
    </location>
</feature>
<proteinExistence type="inferred from homology"/>
<comment type="function">
    <text evidence="6">Probable minor catalytic subunit of succinate dehydrogenase (SDH) that is involved in complex II of the mitochondrial electron transport chain and is responsible for transferring electrons from succinate to ubiquinone (coenzyme Q). Probably forms a catalytic dimer with SDH2. Electrons flow from succinate to the FAD bound to the catalytic subunit, and sequentially through the iron-sulfur clusters bound to SDH2 and enter the membrane dimer formed by SDH3 and SDH4.</text>
</comment>
<comment type="catalytic activity">
    <reaction evidence="1">
        <text>a quinone + succinate = fumarate + a quinol</text>
        <dbReference type="Rhea" id="RHEA:40523"/>
        <dbReference type="ChEBI" id="CHEBI:24646"/>
        <dbReference type="ChEBI" id="CHEBI:29806"/>
        <dbReference type="ChEBI" id="CHEBI:30031"/>
        <dbReference type="ChEBI" id="CHEBI:132124"/>
        <dbReference type="EC" id="1.3.5.1"/>
    </reaction>
</comment>
<comment type="cofactor">
    <cofactor evidence="3">
        <name>FAD</name>
        <dbReference type="ChEBI" id="CHEBI:57692"/>
    </cofactor>
</comment>
<comment type="pathway">
    <text evidence="1">Carbohydrate metabolism; tricarboxylic acid cycle; fumarate from succinate (eukaryal route): step 1/1.</text>
</comment>
<comment type="subunit">
    <text evidence="2">Component of complex II composed of four subunits: a flavoprotein (FP), an iron-sulfur protein (IP), and a cytochrome b composed of a large and a small subunit.</text>
</comment>
<comment type="subcellular location">
    <subcellularLocation>
        <location evidence="2">Mitochondrion inner membrane</location>
        <topology evidence="2">Peripheral membrane protein</topology>
        <orientation evidence="2">Matrix side</orientation>
    </subcellularLocation>
</comment>
<comment type="miscellaneous">
    <text>In vitro, can complement a SDH1 disruption and leads to less than 15% of wild-type SDH reductase activity probably due to its lower expression level (compared to SDH1).</text>
</comment>
<comment type="similarity">
    <text evidence="7">Belongs to the FAD-dependent oxidoreductase 2 family. FRD/SDH subfamily.</text>
</comment>
<accession>P47052</accession>
<accession>D6VWD9</accession>
<dbReference type="EC" id="1.3.5.1" evidence="1"/>
<dbReference type="EMBL" id="Z49320">
    <property type="protein sequence ID" value="CAA89336.1"/>
    <property type="molecule type" value="Genomic_DNA"/>
</dbReference>
<dbReference type="EMBL" id="BK006943">
    <property type="protein sequence ID" value="DAA08755.1"/>
    <property type="molecule type" value="Genomic_DNA"/>
</dbReference>
<dbReference type="PIR" id="S56817">
    <property type="entry name" value="S56817"/>
</dbReference>
<dbReference type="SMR" id="P47052"/>
<dbReference type="BioGRID" id="33713">
    <property type="interactions" value="269"/>
</dbReference>
<dbReference type="DIP" id="DIP-4262N"/>
<dbReference type="FunCoup" id="P47052">
    <property type="interactions" value="760"/>
</dbReference>
<dbReference type="IntAct" id="P47052">
    <property type="interactions" value="4"/>
</dbReference>
<dbReference type="MINT" id="P47052"/>
<dbReference type="STRING" id="4932.YJL045W"/>
<dbReference type="iPTMnet" id="P47052"/>
<dbReference type="PaxDb" id="4932-YJL045W"/>
<dbReference type="PeptideAtlas" id="P47052"/>
<dbReference type="EnsemblFungi" id="YJL045W_mRNA">
    <property type="protein sequence ID" value="YJL045W"/>
    <property type="gene ID" value="YJL045W"/>
</dbReference>
<dbReference type="KEGG" id="sce:YJL045W"/>
<dbReference type="AGR" id="SGD:S000003581"/>
<dbReference type="SGD" id="S000003581">
    <property type="gene designation" value="YJL045W"/>
</dbReference>
<dbReference type="VEuPathDB" id="FungiDB:YJL045W"/>
<dbReference type="eggNOG" id="KOG2403">
    <property type="taxonomic scope" value="Eukaryota"/>
</dbReference>
<dbReference type="GeneTree" id="ENSGT00910000144277"/>
<dbReference type="HOGENOM" id="CLU_014312_6_1_1"/>
<dbReference type="InParanoid" id="P47052"/>
<dbReference type="OMA" id="NRCAETI"/>
<dbReference type="OrthoDB" id="71672at2759"/>
<dbReference type="BioCyc" id="YEAST:YJL045W-MONOMER"/>
<dbReference type="UniPathway" id="UPA00223">
    <property type="reaction ID" value="UER01006"/>
</dbReference>
<dbReference type="BioGRID-ORCS" id="853405">
    <property type="hits" value="0 hits in 10 CRISPR screens"/>
</dbReference>
<dbReference type="PRO" id="PR:P47052"/>
<dbReference type="Proteomes" id="UP000002311">
    <property type="component" value="Chromosome X"/>
</dbReference>
<dbReference type="RNAct" id="P47052">
    <property type="molecule type" value="protein"/>
</dbReference>
<dbReference type="GO" id="GO:0005743">
    <property type="term" value="C:mitochondrial inner membrane"/>
    <property type="evidence" value="ECO:0007669"/>
    <property type="project" value="UniProtKB-SubCell"/>
</dbReference>
<dbReference type="GO" id="GO:0005739">
    <property type="term" value="C:mitochondrion"/>
    <property type="evidence" value="ECO:0007005"/>
    <property type="project" value="SGD"/>
</dbReference>
<dbReference type="GO" id="GO:0045273">
    <property type="term" value="C:respiratory chain complex II (succinate dehydrogenase)"/>
    <property type="evidence" value="ECO:0000318"/>
    <property type="project" value="GO_Central"/>
</dbReference>
<dbReference type="GO" id="GO:0009055">
    <property type="term" value="F:electron transfer activity"/>
    <property type="evidence" value="ECO:0000318"/>
    <property type="project" value="GO_Central"/>
</dbReference>
<dbReference type="GO" id="GO:0050660">
    <property type="term" value="F:flavin adenine dinucleotide binding"/>
    <property type="evidence" value="ECO:0000318"/>
    <property type="project" value="GO_Central"/>
</dbReference>
<dbReference type="GO" id="GO:0008177">
    <property type="term" value="F:succinate dehydrogenase (quinone) activity"/>
    <property type="evidence" value="ECO:0000315"/>
    <property type="project" value="SGD"/>
</dbReference>
<dbReference type="GO" id="GO:0045333">
    <property type="term" value="P:cellular respiration"/>
    <property type="evidence" value="ECO:0000315"/>
    <property type="project" value="SGD"/>
</dbReference>
<dbReference type="GO" id="GO:0006121">
    <property type="term" value="P:mitochondrial electron transport, succinate to ubiquinone"/>
    <property type="evidence" value="ECO:0000318"/>
    <property type="project" value="GO_Central"/>
</dbReference>
<dbReference type="GO" id="GO:0006099">
    <property type="term" value="P:tricarboxylic acid cycle"/>
    <property type="evidence" value="ECO:0007669"/>
    <property type="project" value="UniProtKB-UniPathway"/>
</dbReference>
<dbReference type="FunFam" id="3.90.700.10:FF:000001">
    <property type="entry name" value="Mitochondrial succinate dehydrogenase flavoprotein subunit"/>
    <property type="match status" value="1"/>
</dbReference>
<dbReference type="FunFam" id="4.10.80.40:FF:000002">
    <property type="entry name" value="Succinate dehydrogenase [ubiquinone] flavoprotein subunit, mitochondrial"/>
    <property type="match status" value="1"/>
</dbReference>
<dbReference type="FunFam" id="3.50.50.60:FF:001062">
    <property type="entry name" value="Succinate dehydrogenase complex, subunit A, flavoprotein (Fp)"/>
    <property type="match status" value="1"/>
</dbReference>
<dbReference type="FunFam" id="3.50.50.60:FF:000026">
    <property type="entry name" value="Succinate dehydrogenase flavoprotein subunit"/>
    <property type="match status" value="1"/>
</dbReference>
<dbReference type="FunFam" id="1.20.58.100:FF:000001">
    <property type="entry name" value="Succinate dehydrogenase flavoprotein subunit (SdhA)"/>
    <property type="match status" value="1"/>
</dbReference>
<dbReference type="Gene3D" id="3.50.50.60">
    <property type="entry name" value="FAD/NAD(P)-binding domain"/>
    <property type="match status" value="1"/>
</dbReference>
<dbReference type="Gene3D" id="1.20.58.100">
    <property type="entry name" value="Fumarate reductase/succinate dehydrogenase flavoprotein-like, C-terminal domain"/>
    <property type="match status" value="1"/>
</dbReference>
<dbReference type="Gene3D" id="4.10.80.40">
    <property type="entry name" value="succinate dehydrogenase protein domain"/>
    <property type="match status" value="1"/>
</dbReference>
<dbReference type="Gene3D" id="3.90.700.10">
    <property type="entry name" value="Succinate dehydrogenase/fumarate reductase flavoprotein, catalytic domain"/>
    <property type="match status" value="1"/>
</dbReference>
<dbReference type="InterPro" id="IPR003953">
    <property type="entry name" value="FAD-dep_OxRdtase_2_FAD-bd"/>
</dbReference>
<dbReference type="InterPro" id="IPR036188">
    <property type="entry name" value="FAD/NAD-bd_sf"/>
</dbReference>
<dbReference type="InterPro" id="IPR003952">
    <property type="entry name" value="FRD_SDH_FAD_BS"/>
</dbReference>
<dbReference type="InterPro" id="IPR037099">
    <property type="entry name" value="Fum_R/Succ_DH_flav-like_C_sf"/>
</dbReference>
<dbReference type="InterPro" id="IPR015939">
    <property type="entry name" value="Fum_Rdtase/Succ_DH_flav-like_C"/>
</dbReference>
<dbReference type="InterPro" id="IPR030664">
    <property type="entry name" value="SdhA/FrdA/AprA"/>
</dbReference>
<dbReference type="InterPro" id="IPR027477">
    <property type="entry name" value="Succ_DH/fumarate_Rdtase_cat_sf"/>
</dbReference>
<dbReference type="InterPro" id="IPR011281">
    <property type="entry name" value="Succ_DH_flav_su_fwd"/>
</dbReference>
<dbReference type="InterPro" id="IPR014006">
    <property type="entry name" value="Succ_Dhase_FrdA_Gneg"/>
</dbReference>
<dbReference type="NCBIfam" id="TIGR01816">
    <property type="entry name" value="sdhA_forward"/>
    <property type="match status" value="1"/>
</dbReference>
<dbReference type="NCBIfam" id="TIGR01812">
    <property type="entry name" value="sdhA_frdA_Gneg"/>
    <property type="match status" value="1"/>
</dbReference>
<dbReference type="PANTHER" id="PTHR11632">
    <property type="entry name" value="SUCCINATE DEHYDROGENASE 2 FLAVOPROTEIN SUBUNIT"/>
    <property type="match status" value="1"/>
</dbReference>
<dbReference type="PANTHER" id="PTHR11632:SF51">
    <property type="entry name" value="SUCCINATE DEHYDROGENASE [UBIQUINONE] FLAVOPROTEIN SUBUNIT, MITOCHONDRIAL"/>
    <property type="match status" value="1"/>
</dbReference>
<dbReference type="Pfam" id="PF00890">
    <property type="entry name" value="FAD_binding_2"/>
    <property type="match status" value="1"/>
</dbReference>
<dbReference type="Pfam" id="PF02910">
    <property type="entry name" value="Succ_DH_flav_C"/>
    <property type="match status" value="1"/>
</dbReference>
<dbReference type="PIRSF" id="PIRSF000171">
    <property type="entry name" value="SDHA_APRA_LASPO"/>
    <property type="match status" value="1"/>
</dbReference>
<dbReference type="SUPFAM" id="SSF51905">
    <property type="entry name" value="FAD/NAD(P)-binding domain"/>
    <property type="match status" value="1"/>
</dbReference>
<dbReference type="SUPFAM" id="SSF46977">
    <property type="entry name" value="Succinate dehydrogenase/fumarate reductase flavoprotein C-terminal domain"/>
    <property type="match status" value="1"/>
</dbReference>
<dbReference type="SUPFAM" id="SSF56425">
    <property type="entry name" value="Succinate dehydrogenase/fumarate reductase flavoprotein, catalytic domain"/>
    <property type="match status" value="1"/>
</dbReference>
<dbReference type="PROSITE" id="PS00504">
    <property type="entry name" value="FRD_SDH_FAD_BINDING"/>
    <property type="match status" value="1"/>
</dbReference>
<protein>
    <recommendedName>
        <fullName>Succinate dehydrogenase [ubiquinone] flavoprotein subunit 2, mitochondrial</fullName>
        <ecNumber evidence="1">1.3.5.1</ecNumber>
    </recommendedName>
    <alternativeName>
        <fullName>Flavoprotein subunit of complex II</fullName>
        <shortName>FP</shortName>
    </alternativeName>
    <alternativeName>
        <fullName>SDH1b</fullName>
    </alternativeName>
</protein>
<reference key="1">
    <citation type="journal article" date="1996" name="EMBO J.">
        <title>Complete nucleotide sequence of Saccharomyces cerevisiae chromosome X.</title>
        <authorList>
            <person name="Galibert F."/>
            <person name="Alexandraki D."/>
            <person name="Baur A."/>
            <person name="Boles E."/>
            <person name="Chalwatzis N."/>
            <person name="Chuat J.-C."/>
            <person name="Coster F."/>
            <person name="Cziepluch C."/>
            <person name="de Haan M."/>
            <person name="Domdey H."/>
            <person name="Durand P."/>
            <person name="Entian K.-D."/>
            <person name="Gatius M."/>
            <person name="Goffeau A."/>
            <person name="Grivell L.A."/>
            <person name="Hennemann A."/>
            <person name="Herbert C.J."/>
            <person name="Heumann K."/>
            <person name="Hilger F."/>
            <person name="Hollenberg C.P."/>
            <person name="Huang M.-E."/>
            <person name="Jacq C."/>
            <person name="Jauniaux J.-C."/>
            <person name="Katsoulou C."/>
            <person name="Kirchrath L."/>
            <person name="Kleine K."/>
            <person name="Kordes E."/>
            <person name="Koetter P."/>
            <person name="Liebl S."/>
            <person name="Louis E.J."/>
            <person name="Manus V."/>
            <person name="Mewes H.-W."/>
            <person name="Miosga T."/>
            <person name="Obermaier B."/>
            <person name="Perea J."/>
            <person name="Pohl T.M."/>
            <person name="Portetelle D."/>
            <person name="Pujol A."/>
            <person name="Purnelle B."/>
            <person name="Ramezani Rad M."/>
            <person name="Rasmussen S.W."/>
            <person name="Rose M."/>
            <person name="Rossau R."/>
            <person name="Schaaff-Gerstenschlaeger I."/>
            <person name="Smits P.H.M."/>
            <person name="Scarcez T."/>
            <person name="Soriano N."/>
            <person name="To Van D."/>
            <person name="Tzermia M."/>
            <person name="Van Broekhoven A."/>
            <person name="Vandenbol M."/>
            <person name="Wedler H."/>
            <person name="von Wettstein D."/>
            <person name="Wambutt R."/>
            <person name="Zagulski M."/>
            <person name="Zollner A."/>
            <person name="Karpfinger-Hartl L."/>
        </authorList>
    </citation>
    <scope>NUCLEOTIDE SEQUENCE [LARGE SCALE GENOMIC DNA]</scope>
    <source>
        <strain>ATCC 204508 / S288c</strain>
    </source>
</reference>
<reference key="2">
    <citation type="journal article" date="2014" name="G3 (Bethesda)">
        <title>The reference genome sequence of Saccharomyces cerevisiae: Then and now.</title>
        <authorList>
            <person name="Engel S.R."/>
            <person name="Dietrich F.S."/>
            <person name="Fisk D.G."/>
            <person name="Binkley G."/>
            <person name="Balakrishnan R."/>
            <person name="Costanzo M.C."/>
            <person name="Dwight S.S."/>
            <person name="Hitz B.C."/>
            <person name="Karra K."/>
            <person name="Nash R.S."/>
            <person name="Weng S."/>
            <person name="Wong E.D."/>
            <person name="Lloyd P."/>
            <person name="Skrzypek M.S."/>
            <person name="Miyasato S.R."/>
            <person name="Simison M."/>
            <person name="Cherry J.M."/>
        </authorList>
    </citation>
    <scope>GENOME REANNOTATION</scope>
    <source>
        <strain>ATCC 204508 / S288c</strain>
    </source>
</reference>
<reference key="3">
    <citation type="journal article" date="1998" name="Yeast">
        <title>Suppression of sdh1 mutations by the SDH1b gene of Saccharomyces cerevisiae.</title>
        <authorList>
            <person name="Colby G."/>
            <person name="Ishii Y."/>
            <person name="Tzagoloff A."/>
        </authorList>
    </citation>
    <scope>FUNCTION</scope>
</reference>
<evidence type="ECO:0000250" key="1">
    <source>
        <dbReference type="UniProtKB" id="P31040"/>
    </source>
</evidence>
<evidence type="ECO:0000250" key="2">
    <source>
        <dbReference type="UniProtKB" id="Q00711"/>
    </source>
</evidence>
<evidence type="ECO:0000250" key="3">
    <source>
        <dbReference type="UniProtKB" id="Q0QF01"/>
    </source>
</evidence>
<evidence type="ECO:0000250" key="4">
    <source>
        <dbReference type="UniProtKB" id="Q9YHT1"/>
    </source>
</evidence>
<evidence type="ECO:0000255" key="5"/>
<evidence type="ECO:0000269" key="6">
    <source>
    </source>
</evidence>
<evidence type="ECO:0000305" key="7"/>
<sequence length="634" mass="69382">MLSLKKGITKSYILQRTFTSSSVVRQIGEVKSESKPPAKYHIIDHEYDCVVVGAGGAGLRAAFGLAEAGYKTACLSKLFPTRSHTVAAQGGINAALGNMHPDDWKSHMYDTVKGSDWLGDQDAIHYMTREAPKSVIELEHYGMPFSRTEDGRIYQRAFGGQSKDFGKGGQAYRTCAVADRTGHAMLHTLYGQALKNNTHFFIEYFAMDLLTHNGEVVGVIAYNQEDGTIHRFRAHKTVIATGGYGRAYFSCTSAHTCTGDGNAMVSRAGFPLEDLEFVQFHPSGIYGSGCLITEGARGEGGFLLNSEGERFMERYAPTAKDLASRDVVSRAITMEIRAGRGVGKNKDHILLQLSHLPPEVLKERLPGISETAAVFAGVDVTQEPIPVLPTVHYNMGGIPTKWTGEALTIDEETGEDKVIPGLMACGEAACVSVHGANRLGANSLLDLVVFGRAVANTIADTLQPGLPHKPLASNIGHESIANLDKVRNARGSLKTSQIRLNMQRTMQKDVSVFRTQDTLDEGVRNITEVDKTFEDVHVSDKSMIWNSDLVETLELQNLLTCATQTAVSASKRKESRGAHAREDYAKRDDVNWRKHTLSWQKGTSTPVKIKYRNVIAHTLDENECAPVPPAVRSY</sequence>